<name>GP2A_PRRSL</name>
<gene>
    <name type="primary">GP2a</name>
    <name type="ORF">2a</name>
</gene>
<dbReference type="EMBL" id="M96262">
    <property type="protein sequence ID" value="AAA46275.1"/>
    <property type="molecule type" value="Genomic_RNA"/>
</dbReference>
<dbReference type="EMBL" id="L04493">
    <property type="protein sequence ID" value="AAA47102.1"/>
    <property type="molecule type" value="Genomic_RNA"/>
</dbReference>
<dbReference type="PIR" id="B45392">
    <property type="entry name" value="B45392"/>
</dbReference>
<dbReference type="PIR" id="C36861">
    <property type="entry name" value="C36861"/>
</dbReference>
<dbReference type="GlyCosmos" id="Q04566">
    <property type="glycosylation" value="2 sites, No reported glycans"/>
</dbReference>
<dbReference type="Proteomes" id="UP000006687">
    <property type="component" value="Segment"/>
</dbReference>
<dbReference type="GO" id="GO:0005576">
    <property type="term" value="C:extracellular region"/>
    <property type="evidence" value="ECO:0007669"/>
    <property type="project" value="UniProtKB-SubCell"/>
</dbReference>
<dbReference type="GO" id="GO:0044167">
    <property type="term" value="C:host cell endoplasmic reticulum membrane"/>
    <property type="evidence" value="ECO:0007669"/>
    <property type="project" value="UniProtKB-SubCell"/>
</dbReference>
<dbReference type="GO" id="GO:0044178">
    <property type="term" value="C:host cell Golgi membrane"/>
    <property type="evidence" value="ECO:0007669"/>
    <property type="project" value="UniProtKB-SubCell"/>
</dbReference>
<dbReference type="GO" id="GO:0016020">
    <property type="term" value="C:membrane"/>
    <property type="evidence" value="ECO:0007669"/>
    <property type="project" value="UniProtKB-KW"/>
</dbReference>
<dbReference type="GO" id="GO:0019031">
    <property type="term" value="C:viral envelope"/>
    <property type="evidence" value="ECO:0007669"/>
    <property type="project" value="UniProtKB-KW"/>
</dbReference>
<dbReference type="GO" id="GO:0055036">
    <property type="term" value="C:virion membrane"/>
    <property type="evidence" value="ECO:0007669"/>
    <property type="project" value="UniProtKB-SubCell"/>
</dbReference>
<dbReference type="GO" id="GO:0046718">
    <property type="term" value="P:symbiont entry into host cell"/>
    <property type="evidence" value="ECO:0007669"/>
    <property type="project" value="UniProtKB-KW"/>
</dbReference>
<dbReference type="GO" id="GO:0019062">
    <property type="term" value="P:virion attachment to host cell"/>
    <property type="evidence" value="ECO:0007669"/>
    <property type="project" value="UniProtKB-KW"/>
</dbReference>
<dbReference type="InterPro" id="IPR003434">
    <property type="entry name" value="Arteri_GP2a"/>
</dbReference>
<dbReference type="Pfam" id="PF02340">
    <property type="entry name" value="PRRSV_Env"/>
    <property type="match status" value="1"/>
</dbReference>
<proteinExistence type="evidence at protein level"/>
<keyword id="KW-0325">Glycoprotein</keyword>
<keyword id="KW-1038">Host endoplasmic reticulum</keyword>
<keyword id="KW-1040">Host Golgi apparatus</keyword>
<keyword id="KW-1043">Host membrane</keyword>
<keyword id="KW-0945">Host-virus interaction</keyword>
<keyword id="KW-0472">Membrane</keyword>
<keyword id="KW-1185">Reference proteome</keyword>
<keyword id="KW-0964">Secreted</keyword>
<keyword id="KW-0732">Signal</keyword>
<keyword id="KW-0812">Transmembrane</keyword>
<keyword id="KW-1133">Transmembrane helix</keyword>
<keyword id="KW-1161">Viral attachment to host cell</keyword>
<keyword id="KW-0261">Viral envelope protein</keyword>
<keyword id="KW-0946">Virion</keyword>
<keyword id="KW-1160">Virus entry into host cell</keyword>
<comment type="function">
    <text evidence="1">Minor envelope protein. Along with GP4, serves as the viral attachment protein responsible for mediating interactions with CD163 thereby playing a role in virus entry into susceptible host cells (By similarity).</text>
</comment>
<comment type="subunit">
    <text evidence="1 4">Heterotrimer of GP2a, GP3, and GP4 (By similarity). The GP2a-GP3-GP4 complex associates with the E protein (Probable). Interacts with host CD163; this interaction plays a role in virus entry into host cell (By similarity).</text>
</comment>
<comment type="subcellular location">
    <subcellularLocation>
        <location evidence="3">Virion membrane</location>
        <topology evidence="3">Single-pass type I membrane protein</topology>
    </subcellularLocation>
    <subcellularLocation>
        <location evidence="3">Host endoplasmic reticulum membrane</location>
        <topology evidence="3">Single-pass type I membrane protein</topology>
    </subcellularLocation>
    <subcellularLocation>
        <location evidence="3">Host Golgi apparatus membrane</location>
        <topology evidence="3">Single-pass type I membrane protein</topology>
    </subcellularLocation>
    <subcellularLocation>
        <location evidence="3">Secreted</location>
    </subcellularLocation>
</comment>
<sequence length="249" mass="28375">MQWGHCGVKSASCSWTPSLSSLLVWLILPFSLPYCLGSPSQDGYWSFFSEWFAPRFSVRALPFTLPNYRRSYEGLLPNCRPDVPQFAVKHPLGMFWHMRVSHLIDEMVSRRIYQTMEHSGQAAWKQVVGEATLTKLSGLDIVTHFQHLAAVEADSCRFLSSRLVMLKNLAVGNVSLQYNTTLDRVELIFPTPGTRPKLTDFRQWLISVHASIFSSVASSVTLFIVLWLRIPALRYVFGFHWPTATHHSS</sequence>
<feature type="signal peptide" evidence="2">
    <location>
        <begin position="1"/>
        <end position="35"/>
    </location>
</feature>
<feature type="chain" id="PRO_0000080877" description="Glycoprotein 2a">
    <location>
        <begin position="36"/>
        <end position="249"/>
    </location>
</feature>
<feature type="topological domain" description="Virion surface" evidence="2">
    <location>
        <begin position="36"/>
        <end position="207"/>
    </location>
</feature>
<feature type="transmembrane region" description="Helical" evidence="2">
    <location>
        <begin position="208"/>
        <end position="228"/>
    </location>
</feature>
<feature type="topological domain" description="Intravirion" evidence="2">
    <location>
        <begin position="229"/>
        <end position="249"/>
    </location>
</feature>
<feature type="glycosylation site" description="N-linked (GlcNAc...) asparagine; by host" evidence="2">
    <location>
        <position position="173"/>
    </location>
</feature>
<feature type="glycosylation site" description="N-linked (GlcNAc...) asparagine; by host" evidence="2">
    <location>
        <position position="179"/>
    </location>
</feature>
<feature type="sequence conflict" description="In Ref. 2; AAA47102." evidence="4" ref="2">
    <original>P</original>
    <variation>S</variation>
    <location>
        <position position="29"/>
    </location>
</feature>
<feature type="sequence conflict" description="In Ref. 2; AAA47102." evidence="4" ref="2">
    <original>I</original>
    <variation>V</variation>
    <location>
        <position position="206"/>
    </location>
</feature>
<organism>
    <name type="scientific">Porcine reproductive and respiratory syndrome virus (strain Lelystad)</name>
    <name type="common">PRRSV</name>
    <dbReference type="NCBI Taxonomy" id="11049"/>
    <lineage>
        <taxon>Viruses</taxon>
        <taxon>Riboviria</taxon>
        <taxon>Orthornavirae</taxon>
        <taxon>Pisuviricota</taxon>
        <taxon>Pisoniviricetes</taxon>
        <taxon>Nidovirales</taxon>
        <taxon>Arnidovirineae</taxon>
        <taxon>Arteriviridae</taxon>
        <taxon>Variarterivirinae</taxon>
        <taxon>Betaarterivirus</taxon>
        <taxon>Eurpobartevirus</taxon>
        <taxon>Betaarterivirus suid 1</taxon>
    </lineage>
</organism>
<evidence type="ECO:0000250" key="1"/>
<evidence type="ECO:0000255" key="2"/>
<evidence type="ECO:0000269" key="3">
    <source>
    </source>
</evidence>
<evidence type="ECO:0000305" key="4"/>
<accession>Q04566</accession>
<reference key="1">
    <citation type="journal article" date="1993" name="Virology">
        <title>Lelystad virus, the causative agent of porcine epidemic abortion and respiratory syndrome (PEARS), is related to LDV and EAV.</title>
        <authorList>
            <person name="Meulenberg J.J.M."/>
            <person name="Hulst M.M."/>
            <person name="de Meijer E.J."/>
            <person name="Moonen P.L.J.M."/>
            <person name="den Besten A."/>
            <person name="de Kluyver E.P."/>
            <person name="Wensvoort G."/>
            <person name="Moormann R.J.M."/>
        </authorList>
    </citation>
    <scope>NUCLEOTIDE SEQUENCE [GENOMIC RNA]</scope>
</reference>
<reference key="2">
    <citation type="journal article" date="1993" name="Virology">
        <title>Molecular characterization of porcine reproductive and respiratory syndrome virus, a member of the arterivirus group.</title>
        <authorList>
            <person name="Conzelmann K.K."/>
            <person name="Visser N."/>
            <person name="van Woensel P."/>
            <person name="Thiel H.J."/>
        </authorList>
    </citation>
    <scope>NUCLEOTIDE SEQUENCE [GENOMIC RNA]</scope>
    <source>
        <strain>Isolate Boxmeer 10</strain>
    </source>
</reference>
<reference key="3">
    <citation type="journal article" date="2005" name="J. Virol.">
        <title>Envelope protein requirements for the assembly of infectious virions of porcine reproductive and respiratory syndrome virus.</title>
        <authorList>
            <person name="Wissink E.H."/>
            <person name="Kroese M.V."/>
            <person name="van Wijk H.A."/>
            <person name="Rijsewijk F.A."/>
            <person name="Meulenberg J.J."/>
            <person name="Rottier P.J."/>
        </authorList>
    </citation>
    <scope>SUBCELLULAR LOCATION</scope>
    <scope>SUBUNIT</scope>
</reference>
<protein>
    <recommendedName>
        <fullName>Glycoprotein 2a</fullName>
        <shortName>Protein GP2a</shortName>
    </recommendedName>
    <alternativeName>
        <fullName>GP2</fullName>
    </alternativeName>
</protein>
<organismHost>
    <name type="scientific">Sus scrofa</name>
    <name type="common">Pig</name>
    <dbReference type="NCBI Taxonomy" id="9823"/>
</organismHost>